<feature type="chain" id="PRO_0000208766" description="Uncharacterized transporter DIP0830">
    <location>
        <begin position="1"/>
        <end position="541"/>
    </location>
</feature>
<feature type="transmembrane region" description="Helical" evidence="1">
    <location>
        <begin position="4"/>
        <end position="23"/>
    </location>
</feature>
<feature type="transmembrane region" description="Helical" evidence="1">
    <location>
        <begin position="30"/>
        <end position="47"/>
    </location>
</feature>
<feature type="transmembrane region" description="Helical" evidence="1">
    <location>
        <begin position="57"/>
        <end position="79"/>
    </location>
</feature>
<feature type="transmembrane region" description="Helical" evidence="1">
    <location>
        <begin position="91"/>
        <end position="113"/>
    </location>
</feature>
<feature type="transmembrane region" description="Helical" evidence="1">
    <location>
        <begin position="156"/>
        <end position="178"/>
    </location>
</feature>
<feature type="transmembrane region" description="Helical" evidence="1">
    <location>
        <begin position="362"/>
        <end position="384"/>
    </location>
</feature>
<feature type="transmembrane region" description="Helical" evidence="1">
    <location>
        <begin position="389"/>
        <end position="411"/>
    </location>
</feature>
<feature type="transmembrane region" description="Helical" evidence="1">
    <location>
        <begin position="424"/>
        <end position="446"/>
    </location>
</feature>
<feature type="transmembrane region" description="Helical" evidence="1">
    <location>
        <begin position="456"/>
        <end position="478"/>
    </location>
</feature>
<feature type="transmembrane region" description="Helical" evidence="1">
    <location>
        <begin position="516"/>
        <end position="538"/>
    </location>
</feature>
<feature type="domain" description="RCK C-terminal 1" evidence="2">
    <location>
        <begin position="187"/>
        <end position="271"/>
    </location>
</feature>
<feature type="domain" description="RCK C-terminal 2" evidence="2">
    <location>
        <begin position="273"/>
        <end position="354"/>
    </location>
</feature>
<evidence type="ECO:0000255" key="1"/>
<evidence type="ECO:0000255" key="2">
    <source>
        <dbReference type="PROSITE-ProRule" id="PRU00544"/>
    </source>
</evidence>
<evidence type="ECO:0000305" key="3"/>
<keyword id="KW-1003">Cell membrane</keyword>
<keyword id="KW-0472">Membrane</keyword>
<keyword id="KW-1185">Reference proteome</keyword>
<keyword id="KW-0677">Repeat</keyword>
<keyword id="KW-0812">Transmembrane</keyword>
<keyword id="KW-1133">Transmembrane helix</keyword>
<keyword id="KW-0813">Transport</keyword>
<protein>
    <recommendedName>
        <fullName>Uncharacterized transporter DIP0830</fullName>
    </recommendedName>
</protein>
<organism>
    <name type="scientific">Corynebacterium diphtheriae (strain ATCC 700971 / NCTC 13129 / Biotype gravis)</name>
    <dbReference type="NCBI Taxonomy" id="257309"/>
    <lineage>
        <taxon>Bacteria</taxon>
        <taxon>Bacillati</taxon>
        <taxon>Actinomycetota</taxon>
        <taxon>Actinomycetes</taxon>
        <taxon>Mycobacteriales</taxon>
        <taxon>Corynebacteriaceae</taxon>
        <taxon>Corynebacterium</taxon>
    </lineage>
</organism>
<reference key="1">
    <citation type="journal article" date="2003" name="Nucleic Acids Res.">
        <title>The complete genome sequence and analysis of Corynebacterium diphtheriae NCTC13129.</title>
        <authorList>
            <person name="Cerdeno-Tarraga A.-M."/>
            <person name="Efstratiou A."/>
            <person name="Dover L.G."/>
            <person name="Holden M.T.G."/>
            <person name="Pallen M.J."/>
            <person name="Bentley S.D."/>
            <person name="Besra G.S."/>
            <person name="Churcher C.M."/>
            <person name="James K.D."/>
            <person name="De Zoysa A."/>
            <person name="Chillingworth T."/>
            <person name="Cronin A."/>
            <person name="Dowd L."/>
            <person name="Feltwell T."/>
            <person name="Hamlin N."/>
            <person name="Holroyd S."/>
            <person name="Jagels K."/>
            <person name="Moule S."/>
            <person name="Quail M.A."/>
            <person name="Rabbinowitsch E."/>
            <person name="Rutherford K.M."/>
            <person name="Thomson N.R."/>
            <person name="Unwin L."/>
            <person name="Whitehead S."/>
            <person name="Barrell B.G."/>
            <person name="Parkhill J."/>
        </authorList>
    </citation>
    <scope>NUCLEOTIDE SEQUENCE [LARGE SCALE GENOMIC DNA]</scope>
    <source>
        <strain>ATCC 700971 / NCTC 13129 / Biotype gravis</strain>
    </source>
</reference>
<accession>Q6NIE7</accession>
<name>Y830_CORDI</name>
<gene>
    <name type="ordered locus">DIP0830</name>
</gene>
<dbReference type="EMBL" id="BX248356">
    <property type="protein sequence ID" value="CAE49346.1"/>
    <property type="molecule type" value="Genomic_DNA"/>
</dbReference>
<dbReference type="SMR" id="Q6NIE7"/>
<dbReference type="STRING" id="257309.DIP0830"/>
<dbReference type="KEGG" id="cdi:DIP0830"/>
<dbReference type="HOGENOM" id="CLU_035023_3_0_11"/>
<dbReference type="Proteomes" id="UP000002198">
    <property type="component" value="Chromosome"/>
</dbReference>
<dbReference type="GO" id="GO:0005886">
    <property type="term" value="C:plasma membrane"/>
    <property type="evidence" value="ECO:0007669"/>
    <property type="project" value="UniProtKB-SubCell"/>
</dbReference>
<dbReference type="GO" id="GO:0008324">
    <property type="term" value="F:monoatomic cation transmembrane transporter activity"/>
    <property type="evidence" value="ECO:0007669"/>
    <property type="project" value="InterPro"/>
</dbReference>
<dbReference type="GO" id="GO:0006813">
    <property type="term" value="P:potassium ion transport"/>
    <property type="evidence" value="ECO:0007669"/>
    <property type="project" value="InterPro"/>
</dbReference>
<dbReference type="Gene3D" id="3.30.70.1450">
    <property type="entry name" value="Regulator of K+ conductance, C-terminal domain"/>
    <property type="match status" value="2"/>
</dbReference>
<dbReference type="InterPro" id="IPR050144">
    <property type="entry name" value="AAE_transporter"/>
</dbReference>
<dbReference type="InterPro" id="IPR006037">
    <property type="entry name" value="RCK_C"/>
</dbReference>
<dbReference type="InterPro" id="IPR036721">
    <property type="entry name" value="RCK_C_sf"/>
</dbReference>
<dbReference type="InterPro" id="IPR006512">
    <property type="entry name" value="YidE_YbjL"/>
</dbReference>
<dbReference type="NCBIfam" id="TIGR01625">
    <property type="entry name" value="YidE_YbjL_dupl"/>
    <property type="match status" value="2"/>
</dbReference>
<dbReference type="PANTHER" id="PTHR30445">
    <property type="entry name" value="K(+)_H(+) ANTIPORTER SUBUNIT KHTT"/>
    <property type="match status" value="1"/>
</dbReference>
<dbReference type="PANTHER" id="PTHR30445:SF3">
    <property type="entry name" value="TRANSPORT PROTEIN YIDE-RELATED"/>
    <property type="match status" value="1"/>
</dbReference>
<dbReference type="Pfam" id="PF06826">
    <property type="entry name" value="Asp-Al_Ex"/>
    <property type="match status" value="2"/>
</dbReference>
<dbReference type="Pfam" id="PF02080">
    <property type="entry name" value="TrkA_C"/>
    <property type="match status" value="1"/>
</dbReference>
<dbReference type="SUPFAM" id="SSF116726">
    <property type="entry name" value="TrkA C-terminal domain-like"/>
    <property type="match status" value="2"/>
</dbReference>
<dbReference type="PROSITE" id="PS51202">
    <property type="entry name" value="RCK_C"/>
    <property type="match status" value="2"/>
</dbReference>
<comment type="subcellular location">
    <subcellularLocation>
        <location evidence="3">Cell membrane</location>
        <topology evidence="3">Multi-pass membrane protein</topology>
    </subcellularLocation>
</comment>
<comment type="similarity">
    <text evidence="3">Belongs to the AAE transporter (TC 2.A.81) family.</text>
</comment>
<proteinExistence type="inferred from homology"/>
<sequence>MDIFVANPLLALFVIMAVGLAIGQVKIRGFSLGVAAVLFAGVGFAAVEPDIHIPHLVYILGLSIFVYSIGLESGHAFFALFKSQGVKQNALAITALALITGISIALFSLIHLNGVTAAGLFTGAVTNTPAMAAVVDSLPSIFGDANKVHEVESLPLVAYSLAYPIGVLGVIAAIGLCAKWFRIDHVQEAHDAGVAVEDLFTRQIKVNHVVTGSDLVIDIHHTLGLEIIVSRIERDGQQTLPTASSRIHMGDVLSVVGTAEELDKAAHVLGDLLPGDPFHGHDLDYRRIFVSNQDLVGIPLAKLRPRLSGILITRVRRGDHDHVATPETVLQLGDRVRVVAAHDRMKSVTALFGDSYRRLSDFNLFPLVAGLALGLLVGMIEVPLPGGAALSLGSAGGPLVVALVLGAVGRSGRFVWQVPYGANLALRQLGITLFLAAIGTTAGASFRASLSDPASLTIIAVGAIITLTLAIFVLVVGYKVMKIPYGQTAGMLAGIQTHPAVLSYVSAMTKNDLPALGYTSVYPLAMIAKIIAAQVVLFALT</sequence>